<proteinExistence type="evidence at transcript level"/>
<keyword id="KW-0238">DNA-binding</keyword>
<keyword id="KW-0371">Homeobox</keyword>
<keyword id="KW-0440">LIM domain</keyword>
<keyword id="KW-0479">Metal-binding</keyword>
<keyword id="KW-0539">Nucleus</keyword>
<keyword id="KW-1185">Reference proteome</keyword>
<keyword id="KW-0677">Repeat</keyword>
<keyword id="KW-0804">Transcription</keyword>
<keyword id="KW-0805">Transcription regulation</keyword>
<keyword id="KW-0862">Zinc</keyword>
<dbReference type="EMBL" id="U61155">
    <property type="protein sequence ID" value="AAC52842.1"/>
    <property type="molecule type" value="mRNA"/>
</dbReference>
<dbReference type="EMBL" id="BC057585">
    <property type="protein sequence ID" value="AAH57585.1"/>
    <property type="molecule type" value="mRNA"/>
</dbReference>
<dbReference type="CCDS" id="CCDS19617.1"/>
<dbReference type="RefSeq" id="NP_032525.1">
    <property type="nucleotide sequence ID" value="NM_008499.5"/>
</dbReference>
<dbReference type="SMR" id="P61375"/>
<dbReference type="BioGRID" id="201158">
    <property type="interactions" value="10"/>
</dbReference>
<dbReference type="FunCoup" id="P61375">
    <property type="interactions" value="895"/>
</dbReference>
<dbReference type="IntAct" id="P61375">
    <property type="interactions" value="2"/>
</dbReference>
<dbReference type="STRING" id="10090.ENSMUSP00000031591"/>
<dbReference type="iPTMnet" id="P61375"/>
<dbReference type="PhosphoSitePlus" id="P61375"/>
<dbReference type="jPOST" id="P61375"/>
<dbReference type="PaxDb" id="10090-ENSMUSP00000031591"/>
<dbReference type="ProteomicsDB" id="264982"/>
<dbReference type="Antibodypedia" id="31279">
    <property type="antibodies" value="220 antibodies from 30 providers"/>
</dbReference>
<dbReference type="DNASU" id="16873"/>
<dbReference type="Ensembl" id="ENSMUST00000031591.10">
    <property type="protein sequence ID" value="ENSMUSP00000031591.7"/>
    <property type="gene ID" value="ENSMUSG00000029595.10"/>
</dbReference>
<dbReference type="GeneID" id="16873"/>
<dbReference type="KEGG" id="mmu:16873"/>
<dbReference type="UCSC" id="uc012ecn.1">
    <property type="organism name" value="mouse"/>
</dbReference>
<dbReference type="AGR" id="MGI:107792"/>
<dbReference type="CTD" id="64211"/>
<dbReference type="MGI" id="MGI:107792">
    <property type="gene designation" value="Lhx5"/>
</dbReference>
<dbReference type="VEuPathDB" id="HostDB:ENSMUSG00000029595"/>
<dbReference type="eggNOG" id="KOG0490">
    <property type="taxonomic scope" value="Eukaryota"/>
</dbReference>
<dbReference type="GeneTree" id="ENSGT00940000161536"/>
<dbReference type="HOGENOM" id="CLU_027802_3_1_1"/>
<dbReference type="InParanoid" id="P61375"/>
<dbReference type="OMA" id="PSDDQRY"/>
<dbReference type="OrthoDB" id="10068367at2759"/>
<dbReference type="PhylomeDB" id="P61375"/>
<dbReference type="TreeFam" id="TF315442"/>
<dbReference type="BioGRID-ORCS" id="16873">
    <property type="hits" value="4 hits in 82 CRISPR screens"/>
</dbReference>
<dbReference type="PRO" id="PR:P61375"/>
<dbReference type="Proteomes" id="UP000000589">
    <property type="component" value="Chromosome 5"/>
</dbReference>
<dbReference type="RNAct" id="P61375">
    <property type="molecule type" value="protein"/>
</dbReference>
<dbReference type="Bgee" id="ENSMUSG00000029595">
    <property type="expression patterns" value="Expressed in white matter of cerebellum and 74 other cell types or tissues"/>
</dbReference>
<dbReference type="ExpressionAtlas" id="P61375">
    <property type="expression patterns" value="baseline and differential"/>
</dbReference>
<dbReference type="GO" id="GO:0005634">
    <property type="term" value="C:nucleus"/>
    <property type="evidence" value="ECO:0007669"/>
    <property type="project" value="UniProtKB-SubCell"/>
</dbReference>
<dbReference type="GO" id="GO:0000981">
    <property type="term" value="F:DNA-binding transcription factor activity, RNA polymerase II-specific"/>
    <property type="evidence" value="ECO:0007669"/>
    <property type="project" value="InterPro"/>
</dbReference>
<dbReference type="GO" id="GO:1990837">
    <property type="term" value="F:sequence-specific double-stranded DNA binding"/>
    <property type="evidence" value="ECO:0007669"/>
    <property type="project" value="Ensembl"/>
</dbReference>
<dbReference type="GO" id="GO:0008270">
    <property type="term" value="F:zinc ion binding"/>
    <property type="evidence" value="ECO:0007669"/>
    <property type="project" value="InterPro"/>
</dbReference>
<dbReference type="GO" id="GO:0021846">
    <property type="term" value="P:cell proliferation in forebrain"/>
    <property type="evidence" value="ECO:0000315"/>
    <property type="project" value="MGI"/>
</dbReference>
<dbReference type="GO" id="GO:0007267">
    <property type="term" value="P:cell-cell signaling"/>
    <property type="evidence" value="ECO:0000316"/>
    <property type="project" value="MGI"/>
</dbReference>
<dbReference type="GO" id="GO:0021702">
    <property type="term" value="P:cerebellar Purkinje cell differentiation"/>
    <property type="evidence" value="ECO:0000316"/>
    <property type="project" value="MGI"/>
</dbReference>
<dbReference type="GO" id="GO:0021937">
    <property type="term" value="P:cerebellar Purkinje cell-granule cell precursor cell signaling"/>
    <property type="evidence" value="ECO:0000316"/>
    <property type="project" value="MGI"/>
</dbReference>
<dbReference type="GO" id="GO:0021549">
    <property type="term" value="P:cerebellum development"/>
    <property type="evidence" value="ECO:0000316"/>
    <property type="project" value="MGI"/>
</dbReference>
<dbReference type="GO" id="GO:0021879">
    <property type="term" value="P:forebrain neuron differentiation"/>
    <property type="evidence" value="ECO:0000315"/>
    <property type="project" value="MGI"/>
</dbReference>
<dbReference type="GO" id="GO:0021766">
    <property type="term" value="P:hippocampus development"/>
    <property type="evidence" value="ECO:0000315"/>
    <property type="project" value="MGI"/>
</dbReference>
<dbReference type="GO" id="GO:0007405">
    <property type="term" value="P:neuroblast proliferation"/>
    <property type="evidence" value="ECO:0000315"/>
    <property type="project" value="MGI"/>
</dbReference>
<dbReference type="GO" id="GO:0045893">
    <property type="term" value="P:positive regulation of DNA-templated transcription"/>
    <property type="evidence" value="ECO:0000316"/>
    <property type="project" value="UniProtKB"/>
</dbReference>
<dbReference type="GO" id="GO:1902692">
    <property type="term" value="P:regulation of neuroblast proliferation"/>
    <property type="evidence" value="ECO:0000315"/>
    <property type="project" value="MGI"/>
</dbReference>
<dbReference type="GO" id="GO:0021527">
    <property type="term" value="P:spinal cord association neuron differentiation"/>
    <property type="evidence" value="ECO:0000316"/>
    <property type="project" value="UniProtKB"/>
</dbReference>
<dbReference type="CDD" id="cd00086">
    <property type="entry name" value="homeodomain"/>
    <property type="match status" value="1"/>
</dbReference>
<dbReference type="CDD" id="cd09367">
    <property type="entry name" value="LIM1_Lhx1_Lhx5"/>
    <property type="match status" value="1"/>
</dbReference>
<dbReference type="CDD" id="cd09375">
    <property type="entry name" value="LIM2_Lhx1_Lhx5"/>
    <property type="match status" value="1"/>
</dbReference>
<dbReference type="FunFam" id="2.10.110.10:FF:000120">
    <property type="entry name" value="Insulin gene enhancer protein ISL-2"/>
    <property type="match status" value="1"/>
</dbReference>
<dbReference type="FunFam" id="1.10.10.60:FF:000075">
    <property type="entry name" value="LIM/homeobox protein Lhx1"/>
    <property type="match status" value="1"/>
</dbReference>
<dbReference type="FunFam" id="2.10.110.10:FF:000046">
    <property type="entry name" value="LIM/homeobox protein Lhx1"/>
    <property type="match status" value="1"/>
</dbReference>
<dbReference type="Gene3D" id="2.10.110.10">
    <property type="entry name" value="Cysteine Rich Protein"/>
    <property type="match status" value="2"/>
</dbReference>
<dbReference type="Gene3D" id="1.10.10.60">
    <property type="entry name" value="Homeodomain-like"/>
    <property type="match status" value="1"/>
</dbReference>
<dbReference type="InterPro" id="IPR001356">
    <property type="entry name" value="HD"/>
</dbReference>
<dbReference type="InterPro" id="IPR017970">
    <property type="entry name" value="Homeobox_CS"/>
</dbReference>
<dbReference type="InterPro" id="IPR009057">
    <property type="entry name" value="Homeodomain-like_sf"/>
</dbReference>
<dbReference type="InterPro" id="IPR049618">
    <property type="entry name" value="Lhx1/5_LIM1"/>
</dbReference>
<dbReference type="InterPro" id="IPR049619">
    <property type="entry name" value="Lhx1/5_LIM2"/>
</dbReference>
<dbReference type="InterPro" id="IPR050453">
    <property type="entry name" value="LIM_Homeobox_TF"/>
</dbReference>
<dbReference type="InterPro" id="IPR001781">
    <property type="entry name" value="Znf_LIM"/>
</dbReference>
<dbReference type="PANTHER" id="PTHR24208">
    <property type="entry name" value="LIM/HOMEOBOX PROTEIN LHX"/>
    <property type="match status" value="1"/>
</dbReference>
<dbReference type="PANTHER" id="PTHR24208:SF115">
    <property type="entry name" value="LIM_HOMEOBOX PROTEIN LHX5"/>
    <property type="match status" value="1"/>
</dbReference>
<dbReference type="Pfam" id="PF00046">
    <property type="entry name" value="Homeodomain"/>
    <property type="match status" value="1"/>
</dbReference>
<dbReference type="Pfam" id="PF00412">
    <property type="entry name" value="LIM"/>
    <property type="match status" value="2"/>
</dbReference>
<dbReference type="SMART" id="SM00389">
    <property type="entry name" value="HOX"/>
    <property type="match status" value="1"/>
</dbReference>
<dbReference type="SMART" id="SM00132">
    <property type="entry name" value="LIM"/>
    <property type="match status" value="2"/>
</dbReference>
<dbReference type="SUPFAM" id="SSF57716">
    <property type="entry name" value="Glucocorticoid receptor-like (DNA-binding domain)"/>
    <property type="match status" value="2"/>
</dbReference>
<dbReference type="SUPFAM" id="SSF46689">
    <property type="entry name" value="Homeodomain-like"/>
    <property type="match status" value="1"/>
</dbReference>
<dbReference type="PROSITE" id="PS00027">
    <property type="entry name" value="HOMEOBOX_1"/>
    <property type="match status" value="1"/>
</dbReference>
<dbReference type="PROSITE" id="PS50071">
    <property type="entry name" value="HOMEOBOX_2"/>
    <property type="match status" value="1"/>
</dbReference>
<dbReference type="PROSITE" id="PS00478">
    <property type="entry name" value="LIM_DOMAIN_1"/>
    <property type="match status" value="2"/>
</dbReference>
<dbReference type="PROSITE" id="PS50023">
    <property type="entry name" value="LIM_DOMAIN_2"/>
    <property type="match status" value="2"/>
</dbReference>
<reference key="1">
    <citation type="journal article" date="1996" name="Genomics">
        <title>Molecular cloning, structure, and chromosomal localization of the mouse LIM/homeobox gene Lhx5.</title>
        <authorList>
            <person name="Bertuzzi S."/>
            <person name="Sheng H.Z."/>
            <person name="Copeland N.G."/>
            <person name="Gilbert D.J."/>
            <person name="Jenkins N.A."/>
            <person name="Taira M."/>
            <person name="Dawid I.B."/>
            <person name="Westphal H."/>
        </authorList>
    </citation>
    <scope>NUCLEOTIDE SEQUENCE [MRNA]</scope>
    <source>
        <strain>FVB/N</strain>
    </source>
</reference>
<reference key="2">
    <citation type="journal article" date="2004" name="Genome Res.">
        <title>The status, quality, and expansion of the NIH full-length cDNA project: the Mammalian Gene Collection (MGC).</title>
        <authorList>
            <consortium name="The MGC Project Team"/>
        </authorList>
    </citation>
    <scope>NUCLEOTIDE SEQUENCE [LARGE SCALE MRNA]</scope>
    <source>
        <strain>C57BL/6J</strain>
        <tissue>Brain</tissue>
    </source>
</reference>
<name>LHX5_MOUSE</name>
<accession>P61375</accession>
<accession>P50459</accession>
<protein>
    <recommendedName>
        <fullName>LIM/homeobox protein Lhx5</fullName>
        <shortName>LIM homeobox protein 5</shortName>
    </recommendedName>
</protein>
<sequence length="402" mass="44388">MMVHCAGCERPILDRFLLNVLDRAWHIKCVQCCECKTNLSEKCFSREGKLYCKNDFFRRFGTKCAGCAQGISPSDLVRKARSKVFHLNCFTCMVCNKQLSTGEELYVIDENKFVCKDDYLSSSSLKEGSLNSVSSCTDRSLSPDLQDPLQDDPKETDNSTSSDKETANNENEEQNSGTKRRGPRTTIKAKQLETLKAAFAATPKPTRHIREQLAQETGLNMRVIQVWFQNRRSKERRMKQLSALGARRHAFFRSPRRMRPLGGRLDESEMLGSTPYTYYGDYQSDYYAPGGNYDFFAHGPPSQAQSPADSSFLAASGPGSTPLGALEPPLAGPHGADNPRFTDMISHPDTPSPEPGLPGALHPMPGEVFSGGPSPPFPMSGTSGYSGPLSHPNPELNEAAVW</sequence>
<feature type="chain" id="PRO_0000075790" description="LIM/homeobox protein Lhx5">
    <location>
        <begin position="1"/>
        <end position="402"/>
    </location>
</feature>
<feature type="domain" description="LIM zinc-binding 1" evidence="2">
    <location>
        <begin position="3"/>
        <end position="61"/>
    </location>
</feature>
<feature type="domain" description="LIM zinc-binding 2" evidence="2">
    <location>
        <begin position="62"/>
        <end position="125"/>
    </location>
</feature>
<feature type="DNA-binding region" description="Homeobox" evidence="1">
    <location>
        <begin position="180"/>
        <end position="239"/>
    </location>
</feature>
<feature type="region of interest" description="Disordered" evidence="3">
    <location>
        <begin position="124"/>
        <end position="186"/>
    </location>
</feature>
<feature type="region of interest" description="Disordered" evidence="3">
    <location>
        <begin position="298"/>
        <end position="402"/>
    </location>
</feature>
<feature type="compositionally biased region" description="Low complexity" evidence="3">
    <location>
        <begin position="124"/>
        <end position="148"/>
    </location>
</feature>
<feature type="compositionally biased region" description="Basic and acidic residues" evidence="3">
    <location>
        <begin position="151"/>
        <end position="167"/>
    </location>
</feature>
<feature type="compositionally biased region" description="Low complexity" evidence="3">
    <location>
        <begin position="300"/>
        <end position="311"/>
    </location>
</feature>
<feature type="compositionally biased region" description="Low complexity" evidence="3">
    <location>
        <begin position="322"/>
        <end position="336"/>
    </location>
</feature>
<comment type="function">
    <text>Plays an essential role in the regulation of neuronal differentiation and migration during development of the central nervous system.</text>
</comment>
<comment type="subcellular location">
    <subcellularLocation>
        <location evidence="4">Nucleus</location>
    </subcellularLocation>
</comment>
<gene>
    <name type="primary">Lhx5</name>
</gene>
<organism>
    <name type="scientific">Mus musculus</name>
    <name type="common">Mouse</name>
    <dbReference type="NCBI Taxonomy" id="10090"/>
    <lineage>
        <taxon>Eukaryota</taxon>
        <taxon>Metazoa</taxon>
        <taxon>Chordata</taxon>
        <taxon>Craniata</taxon>
        <taxon>Vertebrata</taxon>
        <taxon>Euteleostomi</taxon>
        <taxon>Mammalia</taxon>
        <taxon>Eutheria</taxon>
        <taxon>Euarchontoglires</taxon>
        <taxon>Glires</taxon>
        <taxon>Rodentia</taxon>
        <taxon>Myomorpha</taxon>
        <taxon>Muroidea</taxon>
        <taxon>Muridae</taxon>
        <taxon>Murinae</taxon>
        <taxon>Mus</taxon>
        <taxon>Mus</taxon>
    </lineage>
</organism>
<evidence type="ECO:0000255" key="1">
    <source>
        <dbReference type="PROSITE-ProRule" id="PRU00108"/>
    </source>
</evidence>
<evidence type="ECO:0000255" key="2">
    <source>
        <dbReference type="PROSITE-ProRule" id="PRU00125"/>
    </source>
</evidence>
<evidence type="ECO:0000256" key="3">
    <source>
        <dbReference type="SAM" id="MobiDB-lite"/>
    </source>
</evidence>
<evidence type="ECO:0000305" key="4"/>